<accession>Q9QU31</accession>
<name>ORF2_TTVB1</name>
<keyword id="KW-1185">Reference proteome</keyword>
<organismHost>
    <name type="scientific">Homo sapiens</name>
    <name type="common">Human</name>
    <dbReference type="NCBI Taxonomy" id="9606"/>
</organismHost>
<organism>
    <name type="scientific">Torque teno mini virus 1 (isolate TLMV-CBD279)</name>
    <dbReference type="NCBI Taxonomy" id="766183"/>
    <lineage>
        <taxon>Viruses</taxon>
        <taxon>Viruses incertae sedis</taxon>
        <taxon>Anelloviridae</taxon>
        <taxon>Betatorquevirus</taxon>
        <taxon>Betatorquevirus homini1</taxon>
    </lineage>
</organism>
<feature type="chain" id="PRO_0000404280" description="Uncharacterized ORF2 protein">
    <location>
        <begin position="1"/>
        <end position="91"/>
    </location>
</feature>
<protein>
    <recommendedName>
        <fullName>Uncharacterized ORF2 protein</fullName>
    </recommendedName>
</protein>
<reference key="1">
    <citation type="journal article" date="2000" name="Arch. Virol.">
        <title>Identification of a new human DNA virus (TTV-like mini virus, TLMV) intermediately related to TT virus and chicken anemia virus.</title>
        <authorList>
            <person name="Takahashi K."/>
            <person name="Iwasa Y."/>
            <person name="Hijikata M."/>
            <person name="Mishiro S."/>
        </authorList>
    </citation>
    <scope>NUCLEOTIDE SEQUENCE [GENOMIC DNA]</scope>
</reference>
<dbReference type="EMBL" id="AB026931">
    <property type="protein sequence ID" value="BAA86950.1"/>
    <property type="molecule type" value="Genomic_DNA"/>
</dbReference>
<dbReference type="RefSeq" id="YP_003587915.1">
    <property type="nucleotide sequence ID" value="NC_014097.1"/>
</dbReference>
<dbReference type="KEGG" id="vg:9086760"/>
<dbReference type="Proteomes" id="UP000008779">
    <property type="component" value="Segment"/>
</dbReference>
<dbReference type="InterPro" id="IPR004118">
    <property type="entry name" value="HEV_TT_vir_Orf2/Gyrovir_Vp2_N"/>
</dbReference>
<dbReference type="Pfam" id="PF02957">
    <property type="entry name" value="TT_ORF2-like"/>
    <property type="match status" value="1"/>
</dbReference>
<sequence>MSSFLTPAVYSKNGLENQWINTIWNTHDLMCGCNNAIKHLFDILKKKGEQLCLPSTTEDAGTQTHGEEKDYDLEEGDLDALFANDFEEDDG</sequence>
<gene>
    <name type="ORF">ORF2</name>
</gene>
<proteinExistence type="predicted"/>